<proteinExistence type="inferred from homology"/>
<accession>Q135P2</accession>
<organism>
    <name type="scientific">Rhodopseudomonas palustris (strain BisB5)</name>
    <dbReference type="NCBI Taxonomy" id="316057"/>
    <lineage>
        <taxon>Bacteria</taxon>
        <taxon>Pseudomonadati</taxon>
        <taxon>Pseudomonadota</taxon>
        <taxon>Alphaproteobacteria</taxon>
        <taxon>Hyphomicrobiales</taxon>
        <taxon>Nitrobacteraceae</taxon>
        <taxon>Rhodopseudomonas</taxon>
    </lineage>
</organism>
<name>RSMA_RHOPS</name>
<dbReference type="EC" id="2.1.1.182" evidence="1"/>
<dbReference type="EMBL" id="CP000283">
    <property type="protein sequence ID" value="ABE40197.1"/>
    <property type="molecule type" value="Genomic_DNA"/>
</dbReference>
<dbReference type="SMR" id="Q135P2"/>
<dbReference type="STRING" id="316057.RPD_2971"/>
<dbReference type="KEGG" id="rpd:RPD_2971"/>
<dbReference type="eggNOG" id="COG0030">
    <property type="taxonomic scope" value="Bacteria"/>
</dbReference>
<dbReference type="HOGENOM" id="CLU_041220_0_1_5"/>
<dbReference type="BioCyc" id="RPAL316057:RPD_RS14925-MONOMER"/>
<dbReference type="Proteomes" id="UP000001818">
    <property type="component" value="Chromosome"/>
</dbReference>
<dbReference type="GO" id="GO:0005829">
    <property type="term" value="C:cytosol"/>
    <property type="evidence" value="ECO:0007669"/>
    <property type="project" value="TreeGrafter"/>
</dbReference>
<dbReference type="GO" id="GO:0052908">
    <property type="term" value="F:16S rRNA (adenine(1518)-N(6)/adenine(1519)-N(6))-dimethyltransferase activity"/>
    <property type="evidence" value="ECO:0007669"/>
    <property type="project" value="UniProtKB-EC"/>
</dbReference>
<dbReference type="GO" id="GO:0003723">
    <property type="term" value="F:RNA binding"/>
    <property type="evidence" value="ECO:0007669"/>
    <property type="project" value="UniProtKB-KW"/>
</dbReference>
<dbReference type="CDD" id="cd02440">
    <property type="entry name" value="AdoMet_MTases"/>
    <property type="match status" value="1"/>
</dbReference>
<dbReference type="FunFam" id="1.10.8.100:FF:000001">
    <property type="entry name" value="Ribosomal RNA small subunit methyltransferase A"/>
    <property type="match status" value="1"/>
</dbReference>
<dbReference type="Gene3D" id="1.10.8.100">
    <property type="entry name" value="Ribosomal RNA adenine dimethylase-like, domain 2"/>
    <property type="match status" value="1"/>
</dbReference>
<dbReference type="Gene3D" id="3.40.50.150">
    <property type="entry name" value="Vaccinia Virus protein VP39"/>
    <property type="match status" value="1"/>
</dbReference>
<dbReference type="HAMAP" id="MF_00607">
    <property type="entry name" value="16SrRNA_methyltr_A"/>
    <property type="match status" value="1"/>
</dbReference>
<dbReference type="InterPro" id="IPR001737">
    <property type="entry name" value="KsgA/Erm"/>
</dbReference>
<dbReference type="InterPro" id="IPR023165">
    <property type="entry name" value="rRNA_Ade_diMease-like_C"/>
</dbReference>
<dbReference type="InterPro" id="IPR020596">
    <property type="entry name" value="rRNA_Ade_Mease_Trfase_CS"/>
</dbReference>
<dbReference type="InterPro" id="IPR020598">
    <property type="entry name" value="rRNA_Ade_methylase_Trfase_N"/>
</dbReference>
<dbReference type="InterPro" id="IPR011530">
    <property type="entry name" value="rRNA_adenine_dimethylase"/>
</dbReference>
<dbReference type="InterPro" id="IPR029063">
    <property type="entry name" value="SAM-dependent_MTases_sf"/>
</dbReference>
<dbReference type="NCBIfam" id="TIGR00755">
    <property type="entry name" value="ksgA"/>
    <property type="match status" value="1"/>
</dbReference>
<dbReference type="PANTHER" id="PTHR11727">
    <property type="entry name" value="DIMETHYLADENOSINE TRANSFERASE"/>
    <property type="match status" value="1"/>
</dbReference>
<dbReference type="PANTHER" id="PTHR11727:SF7">
    <property type="entry name" value="DIMETHYLADENOSINE TRANSFERASE-RELATED"/>
    <property type="match status" value="1"/>
</dbReference>
<dbReference type="Pfam" id="PF00398">
    <property type="entry name" value="RrnaAD"/>
    <property type="match status" value="1"/>
</dbReference>
<dbReference type="SMART" id="SM00650">
    <property type="entry name" value="rADc"/>
    <property type="match status" value="1"/>
</dbReference>
<dbReference type="SUPFAM" id="SSF53335">
    <property type="entry name" value="S-adenosyl-L-methionine-dependent methyltransferases"/>
    <property type="match status" value="1"/>
</dbReference>
<dbReference type="PROSITE" id="PS01131">
    <property type="entry name" value="RRNA_A_DIMETH"/>
    <property type="match status" value="1"/>
</dbReference>
<dbReference type="PROSITE" id="PS51689">
    <property type="entry name" value="SAM_RNA_A_N6_MT"/>
    <property type="match status" value="1"/>
</dbReference>
<evidence type="ECO:0000255" key="1">
    <source>
        <dbReference type="HAMAP-Rule" id="MF_00607"/>
    </source>
</evidence>
<protein>
    <recommendedName>
        <fullName evidence="1">Ribosomal RNA small subunit methyltransferase A</fullName>
        <ecNumber evidence="1">2.1.1.182</ecNumber>
    </recommendedName>
    <alternativeName>
        <fullName evidence="1">16S rRNA (adenine(1518)-N(6)/adenine(1519)-N(6))-dimethyltransferase</fullName>
    </alternativeName>
    <alternativeName>
        <fullName evidence="1">16S rRNA dimethyladenosine transferase</fullName>
    </alternativeName>
    <alternativeName>
        <fullName evidence="1">16S rRNA dimethylase</fullName>
    </alternativeName>
    <alternativeName>
        <fullName evidence="1">S-adenosylmethionine-6-N', N'-adenosyl(rRNA) dimethyltransferase</fullName>
    </alternativeName>
</protein>
<reference key="1">
    <citation type="submission" date="2006-03" db="EMBL/GenBank/DDBJ databases">
        <title>Complete sequence of Rhodopseudomonas palustris BisB5.</title>
        <authorList>
            <consortium name="US DOE Joint Genome Institute"/>
            <person name="Copeland A."/>
            <person name="Lucas S."/>
            <person name="Lapidus A."/>
            <person name="Barry K."/>
            <person name="Detter J.C."/>
            <person name="Glavina del Rio T."/>
            <person name="Hammon N."/>
            <person name="Israni S."/>
            <person name="Dalin E."/>
            <person name="Tice H."/>
            <person name="Pitluck S."/>
            <person name="Chain P."/>
            <person name="Malfatti S."/>
            <person name="Shin M."/>
            <person name="Vergez L."/>
            <person name="Schmutz J."/>
            <person name="Larimer F."/>
            <person name="Land M."/>
            <person name="Hauser L."/>
            <person name="Pelletier D.A."/>
            <person name="Kyrpides N."/>
            <person name="Lykidis A."/>
            <person name="Oda Y."/>
            <person name="Harwood C.S."/>
            <person name="Richardson P."/>
        </authorList>
    </citation>
    <scope>NUCLEOTIDE SEQUENCE [LARGE SCALE GENOMIC DNA]</scope>
    <source>
        <strain>BisB5</strain>
    </source>
</reference>
<keyword id="KW-0963">Cytoplasm</keyword>
<keyword id="KW-0489">Methyltransferase</keyword>
<keyword id="KW-0694">RNA-binding</keyword>
<keyword id="KW-0698">rRNA processing</keyword>
<keyword id="KW-0949">S-adenosyl-L-methionine</keyword>
<keyword id="KW-0808">Transferase</keyword>
<gene>
    <name evidence="1" type="primary">rsmA</name>
    <name evidence="1" type="synonym">ksgA</name>
    <name type="ordered locus">RPD_2971</name>
</gene>
<feature type="chain" id="PRO_1000056658" description="Ribosomal RNA small subunit methyltransferase A">
    <location>
        <begin position="1"/>
        <end position="287"/>
    </location>
</feature>
<feature type="binding site" evidence="1">
    <location>
        <position position="28"/>
    </location>
    <ligand>
        <name>S-adenosyl-L-methionine</name>
        <dbReference type="ChEBI" id="CHEBI:59789"/>
    </ligand>
</feature>
<feature type="binding site" evidence="1">
    <location>
        <position position="30"/>
    </location>
    <ligand>
        <name>S-adenosyl-L-methionine</name>
        <dbReference type="ChEBI" id="CHEBI:59789"/>
    </ligand>
</feature>
<feature type="binding site" evidence="1">
    <location>
        <position position="55"/>
    </location>
    <ligand>
        <name>S-adenosyl-L-methionine</name>
        <dbReference type="ChEBI" id="CHEBI:59789"/>
    </ligand>
</feature>
<feature type="binding site" evidence="1">
    <location>
        <position position="77"/>
    </location>
    <ligand>
        <name>S-adenosyl-L-methionine</name>
        <dbReference type="ChEBI" id="CHEBI:59789"/>
    </ligand>
</feature>
<feature type="binding site" evidence="1">
    <location>
        <position position="103"/>
    </location>
    <ligand>
        <name>S-adenosyl-L-methionine</name>
        <dbReference type="ChEBI" id="CHEBI:59789"/>
    </ligand>
</feature>
<feature type="binding site" evidence="1">
    <location>
        <position position="123"/>
    </location>
    <ligand>
        <name>S-adenosyl-L-methionine</name>
        <dbReference type="ChEBI" id="CHEBI:59789"/>
    </ligand>
</feature>
<comment type="function">
    <text evidence="1">Specifically dimethylates two adjacent adenosines (A1518 and A1519) in the loop of a conserved hairpin near the 3'-end of 16S rRNA in the 30S particle. May play a critical role in biogenesis of 30S subunits.</text>
</comment>
<comment type="catalytic activity">
    <reaction evidence="1">
        <text>adenosine(1518)/adenosine(1519) in 16S rRNA + 4 S-adenosyl-L-methionine = N(6)-dimethyladenosine(1518)/N(6)-dimethyladenosine(1519) in 16S rRNA + 4 S-adenosyl-L-homocysteine + 4 H(+)</text>
        <dbReference type="Rhea" id="RHEA:19609"/>
        <dbReference type="Rhea" id="RHEA-COMP:10232"/>
        <dbReference type="Rhea" id="RHEA-COMP:10233"/>
        <dbReference type="ChEBI" id="CHEBI:15378"/>
        <dbReference type="ChEBI" id="CHEBI:57856"/>
        <dbReference type="ChEBI" id="CHEBI:59789"/>
        <dbReference type="ChEBI" id="CHEBI:74411"/>
        <dbReference type="ChEBI" id="CHEBI:74493"/>
        <dbReference type="EC" id="2.1.1.182"/>
    </reaction>
</comment>
<comment type="subcellular location">
    <subcellularLocation>
        <location evidence="1">Cytoplasm</location>
    </subcellularLocation>
</comment>
<comment type="similarity">
    <text evidence="1">Belongs to the class I-like SAM-binding methyltransferase superfamily. rRNA adenine N(6)-methyltransferase family. RsmA subfamily.</text>
</comment>
<sequence length="287" mass="31192">MSAIDGLPPLRDVIRRHDLAARKSLGQNFLLDLNLTARIARAAGPLDDVTVVEIGPGPGGLTRALLATGARRVIAIERDERALGALEEIAAHYPGRLEIVCADAMDFDPTPLLGGERAKIVANLPYNIATPLLIGWLCTEPWPPWYDMMVLMFQREVAQRIVAREDDDAYGRLAVLSNWRCETNMLFDIAPSAFVPQPKVTSSVVRLAPRAAPEPCNRAALEQVAAAAFGQRRKMLRQSLKSLGVDPARLAAAAGIDPTRRAETVAVSGFVAMANELNNIRNTKTQT</sequence>